<keyword id="KW-0028">Amino-acid biosynthesis</keyword>
<keyword id="KW-0368">Histidine biosynthesis</keyword>
<keyword id="KW-0378">Hydrolase</keyword>
<keyword id="KW-0486">Methionine biosynthesis</keyword>
<keyword id="KW-0511">Multifunctional enzyme</keyword>
<keyword id="KW-0521">NADP</keyword>
<keyword id="KW-0554">One-carbon metabolism</keyword>
<keyword id="KW-0560">Oxidoreductase</keyword>
<keyword id="KW-0658">Purine biosynthesis</keyword>
<proteinExistence type="inferred from homology"/>
<reference key="1">
    <citation type="journal article" date="2005" name="DNA Res.">
        <title>Complete genome sequence of the facultative anaerobic magnetotactic bacterium Magnetospirillum sp. strain AMB-1.</title>
        <authorList>
            <person name="Matsunaga T."/>
            <person name="Okamura Y."/>
            <person name="Fukuda Y."/>
            <person name="Wahyudi A.T."/>
            <person name="Murase Y."/>
            <person name="Takeyama H."/>
        </authorList>
    </citation>
    <scope>NUCLEOTIDE SEQUENCE [LARGE SCALE GENOMIC DNA]</scope>
    <source>
        <strain>ATCC 700264 / AMB-1</strain>
    </source>
</reference>
<gene>
    <name evidence="1" type="primary">folD</name>
    <name type="ordered locus">amb4374</name>
</gene>
<accession>Q2VYZ7</accession>
<organism>
    <name type="scientific">Paramagnetospirillum magneticum (strain ATCC 700264 / AMB-1)</name>
    <name type="common">Magnetospirillum magneticum</name>
    <dbReference type="NCBI Taxonomy" id="342108"/>
    <lineage>
        <taxon>Bacteria</taxon>
        <taxon>Pseudomonadati</taxon>
        <taxon>Pseudomonadota</taxon>
        <taxon>Alphaproteobacteria</taxon>
        <taxon>Rhodospirillales</taxon>
        <taxon>Magnetospirillaceae</taxon>
        <taxon>Paramagnetospirillum</taxon>
    </lineage>
</organism>
<name>FOLD_PARM1</name>
<feature type="chain" id="PRO_0000268391" description="Bifunctional protein FolD">
    <location>
        <begin position="1"/>
        <end position="295"/>
    </location>
</feature>
<feature type="binding site" evidence="1">
    <location>
        <begin position="167"/>
        <end position="169"/>
    </location>
    <ligand>
        <name>NADP(+)</name>
        <dbReference type="ChEBI" id="CHEBI:58349"/>
    </ligand>
</feature>
<feature type="binding site" evidence="1">
    <location>
        <position position="192"/>
    </location>
    <ligand>
        <name>NADP(+)</name>
        <dbReference type="ChEBI" id="CHEBI:58349"/>
    </ligand>
</feature>
<feature type="binding site" evidence="1">
    <location>
        <position position="233"/>
    </location>
    <ligand>
        <name>NADP(+)</name>
        <dbReference type="ChEBI" id="CHEBI:58349"/>
    </ligand>
</feature>
<dbReference type="EC" id="1.5.1.5" evidence="1"/>
<dbReference type="EC" id="3.5.4.9" evidence="1"/>
<dbReference type="EMBL" id="AP007255">
    <property type="protein sequence ID" value="BAE53178.1"/>
    <property type="molecule type" value="Genomic_DNA"/>
</dbReference>
<dbReference type="RefSeq" id="WP_011386721.1">
    <property type="nucleotide sequence ID" value="NC_007626.1"/>
</dbReference>
<dbReference type="SMR" id="Q2VYZ7"/>
<dbReference type="STRING" id="342108.amb4374"/>
<dbReference type="KEGG" id="mag:amb4374"/>
<dbReference type="HOGENOM" id="CLU_034045_2_1_5"/>
<dbReference type="OrthoDB" id="9803580at2"/>
<dbReference type="UniPathway" id="UPA00193"/>
<dbReference type="Proteomes" id="UP000007058">
    <property type="component" value="Chromosome"/>
</dbReference>
<dbReference type="GO" id="GO:0005829">
    <property type="term" value="C:cytosol"/>
    <property type="evidence" value="ECO:0007669"/>
    <property type="project" value="TreeGrafter"/>
</dbReference>
<dbReference type="GO" id="GO:0004477">
    <property type="term" value="F:methenyltetrahydrofolate cyclohydrolase activity"/>
    <property type="evidence" value="ECO:0007669"/>
    <property type="project" value="UniProtKB-UniRule"/>
</dbReference>
<dbReference type="GO" id="GO:0004488">
    <property type="term" value="F:methylenetetrahydrofolate dehydrogenase (NADP+) activity"/>
    <property type="evidence" value="ECO:0007669"/>
    <property type="project" value="UniProtKB-UniRule"/>
</dbReference>
<dbReference type="GO" id="GO:0000105">
    <property type="term" value="P:L-histidine biosynthetic process"/>
    <property type="evidence" value="ECO:0007669"/>
    <property type="project" value="UniProtKB-KW"/>
</dbReference>
<dbReference type="GO" id="GO:0009086">
    <property type="term" value="P:methionine biosynthetic process"/>
    <property type="evidence" value="ECO:0007669"/>
    <property type="project" value="UniProtKB-KW"/>
</dbReference>
<dbReference type="GO" id="GO:0006164">
    <property type="term" value="P:purine nucleotide biosynthetic process"/>
    <property type="evidence" value="ECO:0007669"/>
    <property type="project" value="UniProtKB-KW"/>
</dbReference>
<dbReference type="GO" id="GO:0035999">
    <property type="term" value="P:tetrahydrofolate interconversion"/>
    <property type="evidence" value="ECO:0007669"/>
    <property type="project" value="UniProtKB-UniRule"/>
</dbReference>
<dbReference type="CDD" id="cd01080">
    <property type="entry name" value="NAD_bind_m-THF_DH_Cyclohyd"/>
    <property type="match status" value="1"/>
</dbReference>
<dbReference type="FunFam" id="3.40.50.720:FF:000006">
    <property type="entry name" value="Bifunctional protein FolD"/>
    <property type="match status" value="1"/>
</dbReference>
<dbReference type="FunFam" id="3.40.50.10860:FF:000005">
    <property type="entry name" value="C-1-tetrahydrofolate synthase, cytoplasmic, putative"/>
    <property type="match status" value="1"/>
</dbReference>
<dbReference type="Gene3D" id="3.40.50.10860">
    <property type="entry name" value="Leucine Dehydrogenase, chain A, domain 1"/>
    <property type="match status" value="1"/>
</dbReference>
<dbReference type="Gene3D" id="3.40.50.720">
    <property type="entry name" value="NAD(P)-binding Rossmann-like Domain"/>
    <property type="match status" value="1"/>
</dbReference>
<dbReference type="HAMAP" id="MF_01576">
    <property type="entry name" value="THF_DHG_CYH"/>
    <property type="match status" value="1"/>
</dbReference>
<dbReference type="InterPro" id="IPR046346">
    <property type="entry name" value="Aminoacid_DH-like_N_sf"/>
</dbReference>
<dbReference type="InterPro" id="IPR036291">
    <property type="entry name" value="NAD(P)-bd_dom_sf"/>
</dbReference>
<dbReference type="InterPro" id="IPR000672">
    <property type="entry name" value="THF_DH/CycHdrlase"/>
</dbReference>
<dbReference type="InterPro" id="IPR020630">
    <property type="entry name" value="THF_DH/CycHdrlase_cat_dom"/>
</dbReference>
<dbReference type="InterPro" id="IPR020867">
    <property type="entry name" value="THF_DH/CycHdrlase_CS"/>
</dbReference>
<dbReference type="InterPro" id="IPR020631">
    <property type="entry name" value="THF_DH/CycHdrlase_NAD-bd_dom"/>
</dbReference>
<dbReference type="NCBIfam" id="NF008058">
    <property type="entry name" value="PRK10792.1"/>
    <property type="match status" value="1"/>
</dbReference>
<dbReference type="NCBIfam" id="NF010783">
    <property type="entry name" value="PRK14186.1"/>
    <property type="match status" value="1"/>
</dbReference>
<dbReference type="NCBIfam" id="NF010785">
    <property type="entry name" value="PRK14188.1"/>
    <property type="match status" value="1"/>
</dbReference>
<dbReference type="PANTHER" id="PTHR48099:SF5">
    <property type="entry name" value="C-1-TETRAHYDROFOLATE SYNTHASE, CYTOPLASMIC"/>
    <property type="match status" value="1"/>
</dbReference>
<dbReference type="PANTHER" id="PTHR48099">
    <property type="entry name" value="C-1-TETRAHYDROFOLATE SYNTHASE, CYTOPLASMIC-RELATED"/>
    <property type="match status" value="1"/>
</dbReference>
<dbReference type="Pfam" id="PF00763">
    <property type="entry name" value="THF_DHG_CYH"/>
    <property type="match status" value="1"/>
</dbReference>
<dbReference type="Pfam" id="PF02882">
    <property type="entry name" value="THF_DHG_CYH_C"/>
    <property type="match status" value="1"/>
</dbReference>
<dbReference type="PRINTS" id="PR00085">
    <property type="entry name" value="THFDHDRGNASE"/>
</dbReference>
<dbReference type="SUPFAM" id="SSF53223">
    <property type="entry name" value="Aminoacid dehydrogenase-like, N-terminal domain"/>
    <property type="match status" value="1"/>
</dbReference>
<dbReference type="SUPFAM" id="SSF51735">
    <property type="entry name" value="NAD(P)-binding Rossmann-fold domains"/>
    <property type="match status" value="1"/>
</dbReference>
<dbReference type="PROSITE" id="PS00767">
    <property type="entry name" value="THF_DHG_CYH_2"/>
    <property type="match status" value="1"/>
</dbReference>
<sequence>MTDAKLIDGNLFSAKLRETITARVAEMKAAHHITPGLAVVLVGEDPASQVYVRTKGKRTVETGMRSFEHKLPADTPEDALLLLIESLNKDPEVHGILVQLPVPKHIDTQKVIEAIDPAKDVDGFHPVNVGRLAAGGDALVPCTPLGSLLLLKDTLGKLGGLDAVVIGRSNIVGKPMAQLLIKESCTVTVAHSQTKDLPGVVRRADIVIAAVGRPEMIKGDWIKPGATVIDVGINRIELPDGTKKLVGDVDFASAVKVAGAITPVPGGVGPMTIACLLRNTLVACARLHKLPEVEF</sequence>
<protein>
    <recommendedName>
        <fullName evidence="1">Bifunctional protein FolD</fullName>
    </recommendedName>
    <domain>
        <recommendedName>
            <fullName evidence="1">Methylenetetrahydrofolate dehydrogenase</fullName>
            <ecNumber evidence="1">1.5.1.5</ecNumber>
        </recommendedName>
    </domain>
    <domain>
        <recommendedName>
            <fullName evidence="1">Methenyltetrahydrofolate cyclohydrolase</fullName>
            <ecNumber evidence="1">3.5.4.9</ecNumber>
        </recommendedName>
    </domain>
</protein>
<evidence type="ECO:0000255" key="1">
    <source>
        <dbReference type="HAMAP-Rule" id="MF_01576"/>
    </source>
</evidence>
<comment type="function">
    <text evidence="1">Catalyzes the oxidation of 5,10-methylenetetrahydrofolate to 5,10-methenyltetrahydrofolate and then the hydrolysis of 5,10-methenyltetrahydrofolate to 10-formyltetrahydrofolate.</text>
</comment>
<comment type="catalytic activity">
    <reaction evidence="1">
        <text>(6R)-5,10-methylene-5,6,7,8-tetrahydrofolate + NADP(+) = (6R)-5,10-methenyltetrahydrofolate + NADPH</text>
        <dbReference type="Rhea" id="RHEA:22812"/>
        <dbReference type="ChEBI" id="CHEBI:15636"/>
        <dbReference type="ChEBI" id="CHEBI:57455"/>
        <dbReference type="ChEBI" id="CHEBI:57783"/>
        <dbReference type="ChEBI" id="CHEBI:58349"/>
        <dbReference type="EC" id="1.5.1.5"/>
    </reaction>
</comment>
<comment type="catalytic activity">
    <reaction evidence="1">
        <text>(6R)-5,10-methenyltetrahydrofolate + H2O = (6R)-10-formyltetrahydrofolate + H(+)</text>
        <dbReference type="Rhea" id="RHEA:23700"/>
        <dbReference type="ChEBI" id="CHEBI:15377"/>
        <dbReference type="ChEBI" id="CHEBI:15378"/>
        <dbReference type="ChEBI" id="CHEBI:57455"/>
        <dbReference type="ChEBI" id="CHEBI:195366"/>
        <dbReference type="EC" id="3.5.4.9"/>
    </reaction>
</comment>
<comment type="pathway">
    <text evidence="1">One-carbon metabolism; tetrahydrofolate interconversion.</text>
</comment>
<comment type="subunit">
    <text evidence="1">Homodimer.</text>
</comment>
<comment type="similarity">
    <text evidence="1">Belongs to the tetrahydrofolate dehydrogenase/cyclohydrolase family.</text>
</comment>